<accession>Q58T59</accession>
<feature type="signal peptide" evidence="2">
    <location>
        <begin position="1"/>
        <end position="18"/>
    </location>
</feature>
<feature type="propeptide" id="PRO_0000003192" evidence="1">
    <location>
        <begin position="19"/>
        <end position="43"/>
    </location>
</feature>
<feature type="peptide" id="PRO_0000003193" description="Maximin-6">
    <location>
        <begin position="44"/>
        <end position="70"/>
    </location>
</feature>
<feature type="propeptide" id="PRO_0000003194" evidence="1">
    <location>
        <begin position="74"/>
        <end position="123"/>
    </location>
</feature>
<feature type="peptide" id="PRO_0000003195" description="Maximin-H10">
    <location>
        <begin position="124"/>
        <end position="143"/>
    </location>
</feature>
<feature type="modified residue" description="Asparagine amide" evidence="3">
    <location>
        <position position="70"/>
    </location>
</feature>
<feature type="modified residue" description="Leucine amide" evidence="3">
    <location>
        <position position="143"/>
    </location>
</feature>
<keyword id="KW-0027">Amidation</keyword>
<keyword id="KW-0878">Amphibian defense peptide</keyword>
<keyword id="KW-0044">Antibiotic</keyword>
<keyword id="KW-0929">Antimicrobial</keyword>
<keyword id="KW-0165">Cleavage on pair of basic residues</keyword>
<keyword id="KW-0204">Cytolysis</keyword>
<keyword id="KW-0903">Direct protein sequencing</keyword>
<keyword id="KW-0295">Fungicide</keyword>
<keyword id="KW-0354">Hemolysis</keyword>
<keyword id="KW-0964">Secreted</keyword>
<keyword id="KW-0732">Signal</keyword>
<comment type="function">
    <text evidence="1">Maximin-6 shows antimicrobial activity against bacteria and against the fungus C.albicans. It has little hemolytic activity (By similarity).</text>
</comment>
<comment type="function">
    <text evidence="1">Maximin-H10 shows antimicrobial activity against bacteria and against the fungus C.albicans. Shows strong hemolytic activity (By similarity).</text>
</comment>
<comment type="subcellular location">
    <subcellularLocation>
        <location>Secreted</location>
    </subcellularLocation>
</comment>
<comment type="tissue specificity">
    <text>Expressed by the skin glands.</text>
</comment>
<comment type="similarity">
    <text evidence="4">Belongs to the bombinin family.</text>
</comment>
<evidence type="ECO:0000250" key="1"/>
<evidence type="ECO:0000255" key="2"/>
<evidence type="ECO:0000269" key="3">
    <source>
    </source>
</evidence>
<evidence type="ECO:0000305" key="4"/>
<reference key="1">
    <citation type="journal article" date="2005" name="Eur. J. Immunol.">
        <title>Variety of antimicrobial peptides in the Bombina maxima toad and evidence of their rapid diversification.</title>
        <authorList>
            <person name="Lee W.-H."/>
            <person name="Li Y."/>
            <person name="Lai R."/>
            <person name="Li S."/>
            <person name="Zhang Y."/>
            <person name="Wang W."/>
        </authorList>
    </citation>
    <scope>NUCLEOTIDE SEQUENCE [MRNA]</scope>
    <scope>PROTEIN SEQUENCE OF 44-70 AND 124-143</scope>
    <scope>AMIDATION AT ASN-70 AND LEU-143</scope>
    <source>
        <tissue>Skin</tissue>
    </source>
</reference>
<name>M6H10_BOMMX</name>
<protein>
    <recommendedName>
        <fullName>Maximins 6/H10</fullName>
    </recommendedName>
    <component>
        <recommendedName>
            <fullName>Maximin-6</fullName>
        </recommendedName>
    </component>
    <component>
        <recommendedName>
            <fullName>Maximin-H10</fullName>
        </recommendedName>
    </component>
</protein>
<dbReference type="EMBL" id="AY849001">
    <property type="protein sequence ID" value="AAX50222.1"/>
    <property type="molecule type" value="mRNA"/>
</dbReference>
<dbReference type="SMR" id="Q58T59"/>
<dbReference type="GO" id="GO:0005576">
    <property type="term" value="C:extracellular region"/>
    <property type="evidence" value="ECO:0007669"/>
    <property type="project" value="UniProtKB-SubCell"/>
</dbReference>
<dbReference type="GO" id="GO:0042742">
    <property type="term" value="P:defense response to bacterium"/>
    <property type="evidence" value="ECO:0007669"/>
    <property type="project" value="UniProtKB-KW"/>
</dbReference>
<dbReference type="GO" id="GO:0050832">
    <property type="term" value="P:defense response to fungus"/>
    <property type="evidence" value="ECO:0007669"/>
    <property type="project" value="UniProtKB-KW"/>
</dbReference>
<dbReference type="GO" id="GO:0031640">
    <property type="term" value="P:killing of cells of another organism"/>
    <property type="evidence" value="ECO:0007669"/>
    <property type="project" value="UniProtKB-KW"/>
</dbReference>
<dbReference type="InterPro" id="IPR007962">
    <property type="entry name" value="Bombinin"/>
</dbReference>
<dbReference type="Pfam" id="PF05298">
    <property type="entry name" value="Bombinin"/>
    <property type="match status" value="1"/>
</dbReference>
<organism>
    <name type="scientific">Bombina maxima</name>
    <name type="common">Giant fire-bellied toad</name>
    <name type="synonym">Chinese red belly toad</name>
    <dbReference type="NCBI Taxonomy" id="161274"/>
    <lineage>
        <taxon>Eukaryota</taxon>
        <taxon>Metazoa</taxon>
        <taxon>Chordata</taxon>
        <taxon>Craniata</taxon>
        <taxon>Vertebrata</taxon>
        <taxon>Euteleostomi</taxon>
        <taxon>Amphibia</taxon>
        <taxon>Batrachia</taxon>
        <taxon>Anura</taxon>
        <taxon>Bombinatoridae</taxon>
        <taxon>Bombina</taxon>
    </lineage>
</organism>
<sequence length="144" mass="15824">MNFKYIVAVSFLIASAYARSVKNDEQSLSQRDVLDEESLREIRGIGGALLSAGKSALKGLAKGLAEHFANGKRTAEDHEVMKRLEAVMRDLDSLDHPEEASERETRGFNQEEIANRFTKKEKRILGPVLGLVSNALGGLLKNLG</sequence>
<proteinExistence type="evidence at protein level"/>